<evidence type="ECO:0000255" key="1"/>
<evidence type="ECO:0000305" key="2"/>
<evidence type="ECO:0007829" key="3">
    <source>
        <dbReference type="PDB" id="2BHM"/>
    </source>
</evidence>
<evidence type="ECO:0007829" key="4">
    <source>
        <dbReference type="PDB" id="5JBS"/>
    </source>
</evidence>
<proteinExistence type="evidence at protein level"/>
<protein>
    <recommendedName>
        <fullName>Type IV secretion system protein virB8</fullName>
    </recommendedName>
</protein>
<comment type="function">
    <text>The VirB system could be required for the establishment of the replication niche in the host.</text>
</comment>
<comment type="interaction">
    <interactant intactId="EBI-6407073">
        <id>Q7CEG3</id>
    </interactant>
    <interactant intactId="EBI-7022388">
        <id>Q9RPX5</id>
        <label>virB10</label>
    </interactant>
    <organismsDiffer>false</organismsDiffer>
    <experiments>5</experiments>
</comment>
<comment type="interaction">
    <interactant intactId="EBI-6407073">
        <id>Q7CEG3</id>
    </interactant>
    <interactant intactId="EBI-6407073">
        <id>Q7CEG3</id>
        <label>virB8</label>
    </interactant>
    <organismsDiffer>false</organismsDiffer>
    <experiments>6</experiments>
</comment>
<comment type="subcellular location">
    <subcellularLocation>
        <location evidence="2">Cell inner membrane</location>
        <topology evidence="2">Single-pass membrane protein</topology>
    </subcellularLocation>
</comment>
<comment type="induction">
    <text>Specifically induced within macrophages by phagosome acidification. Induced at 37 degrees Celsius in minimal medium, suggesting that nutritional stress is a regulating signal.</text>
</comment>
<comment type="miscellaneous">
    <text>Transcription of the operon is maximal in early exponential phase.</text>
</comment>
<comment type="similarity">
    <text evidence="2">Belongs to the virB8 family.</text>
</comment>
<accession>Q7CEG3</accession>
<accession>G0KER0</accession>
<accession>Q7BQL4</accession>
<name>VIRB8_BRUSU</name>
<keyword id="KW-0002">3D-structure</keyword>
<keyword id="KW-0997">Cell inner membrane</keyword>
<keyword id="KW-1003">Cell membrane</keyword>
<keyword id="KW-0472">Membrane</keyword>
<keyword id="KW-0812">Transmembrane</keyword>
<keyword id="KW-1133">Transmembrane helix</keyword>
<keyword id="KW-0843">Virulence</keyword>
<organism>
    <name type="scientific">Brucella suis biovar 1 (strain 1330)</name>
    <dbReference type="NCBI Taxonomy" id="204722"/>
    <lineage>
        <taxon>Bacteria</taxon>
        <taxon>Pseudomonadati</taxon>
        <taxon>Pseudomonadota</taxon>
        <taxon>Alphaproteobacteria</taxon>
        <taxon>Hyphomicrobiales</taxon>
        <taxon>Brucellaceae</taxon>
        <taxon>Brucella/Ochrobactrum group</taxon>
        <taxon>Brucella</taxon>
    </lineage>
</organism>
<feature type="chain" id="PRO_0000291392" description="Type IV secretion system protein virB8">
    <location>
        <begin position="1"/>
        <end position="239"/>
    </location>
</feature>
<feature type="transmembrane region" description="Helical" evidence="1">
    <location>
        <begin position="47"/>
        <end position="67"/>
    </location>
</feature>
<feature type="helix" evidence="4">
    <location>
        <begin position="98"/>
        <end position="115"/>
    </location>
</feature>
<feature type="turn" evidence="4">
    <location>
        <begin position="119"/>
        <end position="121"/>
    </location>
</feature>
<feature type="helix" evidence="4">
    <location>
        <begin position="122"/>
        <end position="132"/>
    </location>
</feature>
<feature type="helix" evidence="4">
    <location>
        <begin position="135"/>
        <end position="142"/>
    </location>
</feature>
<feature type="helix" evidence="4">
    <location>
        <begin position="143"/>
        <end position="145"/>
    </location>
</feature>
<feature type="strand" evidence="3">
    <location>
        <begin position="146"/>
        <end position="149"/>
    </location>
</feature>
<feature type="helix" evidence="4">
    <location>
        <begin position="151"/>
        <end position="155"/>
    </location>
</feature>
<feature type="strand" evidence="4">
    <location>
        <begin position="158"/>
        <end position="170"/>
    </location>
</feature>
<feature type="strand" evidence="4">
    <location>
        <begin position="175"/>
        <end position="186"/>
    </location>
</feature>
<feature type="strand" evidence="4">
    <location>
        <begin position="188"/>
        <end position="190"/>
    </location>
</feature>
<feature type="strand" evidence="4">
    <location>
        <begin position="194"/>
        <end position="206"/>
    </location>
</feature>
<feature type="helix" evidence="4">
    <location>
        <begin position="209"/>
        <end position="211"/>
    </location>
</feature>
<feature type="helix" evidence="4">
    <location>
        <begin position="214"/>
        <end position="219"/>
    </location>
</feature>
<feature type="strand" evidence="4">
    <location>
        <begin position="224"/>
        <end position="233"/>
    </location>
</feature>
<gene>
    <name type="primary">virB8</name>
    <name type="ordered locus">BRA0062</name>
    <name type="ordered locus">BS1330_II0062</name>
</gene>
<sequence>MFGRKQSPQKSVKNGQGNAPSVYDEALNWEAAHVRLVEKSERRAWKIAGAFGTITVLLGIGIAGMLPLKQHVPYLVRVNAQTGAPDILTSLDEKSVSYDTVMDKYWLSQYVIARETYDWYTLQKDYETVGMLSSPSEGQSYASQFQGDKALDKQYGSNVRTSVTIVSIVPNGKGIGTVRFAKTTKRTNETGDGETTHWIATIGYQYVNPSLMSESARLTNPLGFNVTSYRVDPEMGVVQ</sequence>
<reference key="1">
    <citation type="journal article" date="1999" name="Mol. Microbiol.">
        <title>A homologue of the Agrobacterium tumefaciens VirB and Bordetella pertussis Ptl type IV secretion systems is essential for intracellular survival of Brucella suis.</title>
        <authorList>
            <person name="O'Callaghan D."/>
            <person name="Cazevieille C."/>
            <person name="Allardet-Servent A."/>
            <person name="Boschiroli M.L."/>
            <person name="Bourg G."/>
            <person name="Foulongne V."/>
            <person name="Frutos P."/>
            <person name="Kulakov Y."/>
            <person name="Ramuz M."/>
        </authorList>
    </citation>
    <scope>NUCLEOTIDE SEQUENCE [GENOMIC DNA]</scope>
    <source>
        <strain>1330</strain>
    </source>
</reference>
<reference key="2">
    <citation type="journal article" date="2002" name="Proc. Natl. Acad. Sci. U.S.A.">
        <title>The Brucella suis virB operon is induced intracellularly in macrophages.</title>
        <authorList>
            <person name="Boschiroli M.L."/>
            <person name="Ouahrani-Bettache S."/>
            <person name="Foulongne V."/>
            <person name="Michaux-Charachon S."/>
            <person name="Bourg G."/>
            <person name="Allardet-Servent A."/>
            <person name="Cazevieille C."/>
            <person name="Liautard J.P."/>
            <person name="Ramuz M."/>
            <person name="O'Callaghan D."/>
        </authorList>
    </citation>
    <scope>NUCLEOTIDE SEQUENCE [GENOMIC DNA]</scope>
    <scope>EXPRESSION CONDITIONS</scope>
    <source>
        <strain>1330</strain>
    </source>
</reference>
<reference key="3">
    <citation type="journal article" date="2002" name="Proc. Natl. Acad. Sci. U.S.A.">
        <title>The Brucella suis genome reveals fundamental similarities between animal and plant pathogens and symbionts.</title>
        <authorList>
            <person name="Paulsen I.T."/>
            <person name="Seshadri R."/>
            <person name="Nelson K.E."/>
            <person name="Eisen J.A."/>
            <person name="Heidelberg J.F."/>
            <person name="Read T.D."/>
            <person name="Dodson R.J."/>
            <person name="Umayam L.A."/>
            <person name="Brinkac L.M."/>
            <person name="Beanan M.J."/>
            <person name="Daugherty S.C."/>
            <person name="DeBoy R.T."/>
            <person name="Durkin A.S."/>
            <person name="Kolonay J.F."/>
            <person name="Madupu R."/>
            <person name="Nelson W.C."/>
            <person name="Ayodeji B."/>
            <person name="Kraul M."/>
            <person name="Shetty J."/>
            <person name="Malek J.A."/>
            <person name="Van Aken S.E."/>
            <person name="Riedmuller S."/>
            <person name="Tettelin H."/>
            <person name="Gill S.R."/>
            <person name="White O."/>
            <person name="Salzberg S.L."/>
            <person name="Hoover D.L."/>
            <person name="Lindler L.E."/>
            <person name="Halling S.M."/>
            <person name="Boyle S.M."/>
            <person name="Fraser C.M."/>
        </authorList>
    </citation>
    <scope>NUCLEOTIDE SEQUENCE [LARGE SCALE GENOMIC DNA]</scope>
    <source>
        <strain>1330</strain>
    </source>
</reference>
<reference key="4">
    <citation type="journal article" date="2011" name="J. Bacteriol.">
        <title>Revised genome sequence of Brucella suis 1330.</title>
        <authorList>
            <person name="Tae H."/>
            <person name="Shallom S."/>
            <person name="Settlage R."/>
            <person name="Preston D."/>
            <person name="Adams L.G."/>
            <person name="Garner H.R."/>
        </authorList>
    </citation>
    <scope>NUCLEOTIDE SEQUENCE [LARGE SCALE GENOMIC DNA]</scope>
    <source>
        <strain>1330</strain>
    </source>
</reference>
<reference key="5">
    <citation type="journal article" date="2005" name="Proc. Natl. Acad. Sci. U.S.A.">
        <title>Structures of two core subunits of the bacterial type IV secretion system, VirB8 from Brucella suis and ComB10 from Helicobacter pylori.</title>
        <authorList>
            <person name="Terradot L."/>
            <person name="Bayliss R."/>
            <person name="Oomen C."/>
            <person name="Leonard G.A."/>
            <person name="Baron C."/>
            <person name="Waksman G."/>
        </authorList>
    </citation>
    <scope>X-RAY CRYSTALLOGRAPHY (2.4 ANGSTROMS) OF 77-239</scope>
</reference>
<dbReference type="EMBL" id="AF141604">
    <property type="protein sequence ID" value="AAD56618.1"/>
    <property type="molecule type" value="Genomic_DNA"/>
</dbReference>
<dbReference type="EMBL" id="AE014292">
    <property type="protein sequence ID" value="AAN33274.1"/>
    <property type="molecule type" value="Genomic_DNA"/>
</dbReference>
<dbReference type="EMBL" id="CP002998">
    <property type="protein sequence ID" value="AEM19554.1"/>
    <property type="molecule type" value="Genomic_DNA"/>
</dbReference>
<dbReference type="RefSeq" id="WP_002966517.1">
    <property type="nucleotide sequence ID" value="NZ_KN046805.1"/>
</dbReference>
<dbReference type="PDB" id="2BHM">
    <property type="method" value="X-ray"/>
    <property type="resolution" value="2.40 A"/>
    <property type="chains" value="A/B/C/D/E=77-239"/>
</dbReference>
<dbReference type="PDB" id="4AKY">
    <property type="method" value="X-ray"/>
    <property type="resolution" value="2.60 A"/>
    <property type="chains" value="A/B/C/D/E=97-234"/>
</dbReference>
<dbReference type="PDB" id="4AKZ">
    <property type="method" value="X-ray"/>
    <property type="resolution" value="2.25 A"/>
    <property type="chains" value="A/B/C/D/E=97-234"/>
</dbReference>
<dbReference type="PDB" id="5JBS">
    <property type="method" value="X-ray"/>
    <property type="resolution" value="1.95 A"/>
    <property type="chains" value="A/B/C/D=97-238"/>
</dbReference>
<dbReference type="PDBsum" id="2BHM"/>
<dbReference type="PDBsum" id="4AKY"/>
<dbReference type="PDBsum" id="4AKZ"/>
<dbReference type="PDBsum" id="5JBS"/>
<dbReference type="SMR" id="Q7CEG3"/>
<dbReference type="DIP" id="DIP-61163N"/>
<dbReference type="IntAct" id="Q7CEG3">
    <property type="interactions" value="2"/>
</dbReference>
<dbReference type="MINT" id="Q7CEG3"/>
<dbReference type="KEGG" id="bms:BRA0062"/>
<dbReference type="KEGG" id="bsi:BS1330_II0062"/>
<dbReference type="PATRIC" id="fig|204722.21.peg.2308"/>
<dbReference type="HOGENOM" id="CLU_068461_1_1_5"/>
<dbReference type="PhylomeDB" id="Q7CEG3"/>
<dbReference type="EvolutionaryTrace" id="Q7CEG3"/>
<dbReference type="PRO" id="PR:Q7CEG3"/>
<dbReference type="Proteomes" id="UP000007104">
    <property type="component" value="Chromosome II"/>
</dbReference>
<dbReference type="GO" id="GO:0005886">
    <property type="term" value="C:plasma membrane"/>
    <property type="evidence" value="ECO:0007669"/>
    <property type="project" value="UniProtKB-SubCell"/>
</dbReference>
<dbReference type="GO" id="GO:0042802">
    <property type="term" value="F:identical protein binding"/>
    <property type="evidence" value="ECO:0000353"/>
    <property type="project" value="IntAct"/>
</dbReference>
<dbReference type="GO" id="GO:0030255">
    <property type="term" value="P:protein secretion by the type IV secretion system"/>
    <property type="evidence" value="ECO:0007669"/>
    <property type="project" value="InterPro"/>
</dbReference>
<dbReference type="CDD" id="cd16424">
    <property type="entry name" value="VirB8"/>
    <property type="match status" value="1"/>
</dbReference>
<dbReference type="Gene3D" id="3.10.450.230">
    <property type="entry name" value="VirB8 protein"/>
    <property type="match status" value="1"/>
</dbReference>
<dbReference type="InterPro" id="IPR032710">
    <property type="entry name" value="NTF2-like_dom_sf"/>
</dbReference>
<dbReference type="InterPro" id="IPR007430">
    <property type="entry name" value="VirB8"/>
</dbReference>
<dbReference type="InterPro" id="IPR026264">
    <property type="entry name" value="VirB8/PtlE"/>
</dbReference>
<dbReference type="Pfam" id="PF04335">
    <property type="entry name" value="VirB8"/>
    <property type="match status" value="1"/>
</dbReference>
<dbReference type="PIRSF" id="PIRSF003299">
    <property type="entry name" value="VirB8_PtlE"/>
    <property type="match status" value="1"/>
</dbReference>
<dbReference type="SUPFAM" id="SSF54427">
    <property type="entry name" value="NTF2-like"/>
    <property type="match status" value="1"/>
</dbReference>